<keyword id="KW-0256">Endoplasmic reticulum</keyword>
<keyword id="KW-0444">Lipid biosynthesis</keyword>
<keyword id="KW-0443">Lipid metabolism</keyword>
<keyword id="KW-0472">Membrane</keyword>
<keyword id="KW-0489">Methyltransferase</keyword>
<keyword id="KW-0492">Microsome</keyword>
<keyword id="KW-0949">S-adenosyl-L-methionine</keyword>
<keyword id="KW-0808">Transferase</keyword>
<keyword id="KW-0812">Transmembrane</keyword>
<keyword id="KW-1133">Transmembrane helix</keyword>
<comment type="function">
    <text evidence="3">Converts botryococcene to mono- and dimethyl derivatives, but not to tri- and tetramethylated products. Unable to methylate cycloartenol, zymosterol or lanosterol, but can also use squalene as substrate. Methylates both C-3 and C22 positions, but only C-3 position in monomethylated squalenes. In contrast, monomethylated botryococcene occured mainly at the C-20 position yielding showacene, but also at the C-3 position yielding isoshowacene.</text>
</comment>
<comment type="catalytic activity">
    <reaction evidence="3">
        <text>C30 botryococcene + 2 S-adenosyl-L-methionine = 3,20-dimethyl-1,2,21,22-tetradehydro-2,3,20,21-tetrahydrobotryococcene + 2 S-adenosyl-L-homocysteine + 2 H(+)</text>
        <dbReference type="Rhea" id="RHEA:34655"/>
        <dbReference type="ChEBI" id="CHEBI:15378"/>
        <dbReference type="ChEBI" id="CHEBI:57856"/>
        <dbReference type="ChEBI" id="CHEBI:59789"/>
        <dbReference type="ChEBI" id="CHEBI:70786"/>
        <dbReference type="ChEBI" id="CHEBI:70865"/>
        <dbReference type="EC" id="2.1.1.263"/>
    </reaction>
</comment>
<comment type="biophysicochemical properties">
    <kinetics>
        <KM evidence="3">68.9 uM for botryococcene</KM>
    </kinetics>
</comment>
<comment type="subcellular location">
    <subcellularLocation>
        <location evidence="4">Microsome membrane</location>
        <topology evidence="4">Single-pass membrane protein</topology>
    </subcellularLocation>
</comment>
<comment type="similarity">
    <text evidence="2">Belongs to the class I-like SAM-binding methyltransferase superfamily. Erg6/SMT family.</text>
</comment>
<protein>
    <recommendedName>
        <fullName>Botryococcene C-methyltransferase</fullName>
        <ecNumber evidence="3">2.1.1.263</ecNumber>
    </recommendedName>
    <alternativeName>
        <fullName>Triterpene methyltransferase 3</fullName>
    </alternativeName>
</protein>
<name>BOMT_BOTBR</name>
<organism>
    <name type="scientific">Botryococcus braunii</name>
    <name type="common">Green alga</name>
    <dbReference type="NCBI Taxonomy" id="38881"/>
    <lineage>
        <taxon>Eukaryota</taxon>
        <taxon>Viridiplantae</taxon>
        <taxon>Chlorophyta</taxon>
        <taxon>core chlorophytes</taxon>
        <taxon>Trebouxiophyceae</taxon>
        <taxon>Trebouxiophyceae incertae sedis</taxon>
        <taxon>Elliptochloris clade</taxon>
        <taxon>Botryococcus</taxon>
    </lineage>
</organism>
<feature type="chain" id="PRO_0000421357" description="Botryococcene C-methyltransferase">
    <location>
        <begin position="1"/>
        <end position="379"/>
    </location>
</feature>
<feature type="transmembrane region" description="Helical" evidence="1">
    <location>
        <begin position="17"/>
        <end position="37"/>
    </location>
</feature>
<proteinExistence type="evidence at protein level"/>
<gene>
    <name type="primary">TMT-3</name>
</gene>
<evidence type="ECO:0000255" key="1"/>
<evidence type="ECO:0000255" key="2">
    <source>
        <dbReference type="PROSITE-ProRule" id="PRU01022"/>
    </source>
</evidence>
<evidence type="ECO:0000269" key="3">
    <source>
    </source>
</evidence>
<evidence type="ECO:0000305" key="4"/>
<reference key="1">
    <citation type="journal article" date="2012" name="J. Biol. Chem.">
        <title>Functional identification of triterpene methyltransferases from Botryococcus braunii race B.</title>
        <authorList>
            <person name="Niehaus T.D."/>
            <person name="Kinison S."/>
            <person name="Okada S."/>
            <person name="Yeo Y.S."/>
            <person name="Bell S.A."/>
            <person name="Cui P."/>
            <person name="Devarenne T.P."/>
            <person name="Chappell J."/>
        </authorList>
    </citation>
    <scope>NUCLEOTIDE SEQUENCE [MRNA]</scope>
    <scope>FUNCTION</scope>
    <scope>CATALYTIC ACTIVITY</scope>
    <scope>BIOPHYSICOCHEMICAL PROPERTIES</scope>
</reference>
<dbReference type="EC" id="2.1.1.263" evidence="3"/>
<dbReference type="EMBL" id="JN828964">
    <property type="protein sequence ID" value="AEY68258.1"/>
    <property type="molecule type" value="mRNA"/>
</dbReference>
<dbReference type="SMR" id="H2E7T7"/>
<dbReference type="KEGG" id="ag:AEY68258"/>
<dbReference type="BioCyc" id="MetaCyc:MONOMER-17325"/>
<dbReference type="SABIO-RK" id="H2E7T7"/>
<dbReference type="GO" id="GO:0005783">
    <property type="term" value="C:endoplasmic reticulum"/>
    <property type="evidence" value="ECO:0007669"/>
    <property type="project" value="UniProtKB-KW"/>
</dbReference>
<dbReference type="GO" id="GO:0016020">
    <property type="term" value="C:membrane"/>
    <property type="evidence" value="ECO:0007669"/>
    <property type="project" value="UniProtKB-KW"/>
</dbReference>
<dbReference type="GO" id="GO:0008757">
    <property type="term" value="F:S-adenosylmethionine-dependent methyltransferase activity"/>
    <property type="evidence" value="ECO:0007669"/>
    <property type="project" value="InterPro"/>
</dbReference>
<dbReference type="GO" id="GO:0032259">
    <property type="term" value="P:methylation"/>
    <property type="evidence" value="ECO:0007669"/>
    <property type="project" value="UniProtKB-KW"/>
</dbReference>
<dbReference type="GO" id="GO:0006694">
    <property type="term" value="P:steroid biosynthetic process"/>
    <property type="evidence" value="ECO:0007669"/>
    <property type="project" value="InterPro"/>
</dbReference>
<dbReference type="CDD" id="cd02440">
    <property type="entry name" value="AdoMet_MTases"/>
    <property type="match status" value="1"/>
</dbReference>
<dbReference type="Gene3D" id="3.40.50.150">
    <property type="entry name" value="Vaccinia Virus protein VP39"/>
    <property type="match status" value="1"/>
</dbReference>
<dbReference type="InterPro" id="IPR013216">
    <property type="entry name" value="Methyltransf_11"/>
</dbReference>
<dbReference type="InterPro" id="IPR030384">
    <property type="entry name" value="MeTrfase_SMT"/>
</dbReference>
<dbReference type="InterPro" id="IPR029063">
    <property type="entry name" value="SAM-dependent_MTases_sf"/>
</dbReference>
<dbReference type="InterPro" id="IPR013705">
    <property type="entry name" value="Sterol_MeTrfase_C"/>
</dbReference>
<dbReference type="PANTHER" id="PTHR44742">
    <property type="match status" value="1"/>
</dbReference>
<dbReference type="PANTHER" id="PTHR44742:SF2">
    <property type="entry name" value="24-METHYLENESTEROL C-METHYLTRANSFERASE 2"/>
    <property type="match status" value="1"/>
</dbReference>
<dbReference type="Pfam" id="PF08241">
    <property type="entry name" value="Methyltransf_11"/>
    <property type="match status" value="1"/>
</dbReference>
<dbReference type="Pfam" id="PF08498">
    <property type="entry name" value="Sterol_MT_C"/>
    <property type="match status" value="1"/>
</dbReference>
<dbReference type="SUPFAM" id="SSF53335">
    <property type="entry name" value="S-adenosyl-L-methionine-dependent methyltransferases"/>
    <property type="match status" value="1"/>
</dbReference>
<dbReference type="PROSITE" id="PS51685">
    <property type="entry name" value="SAM_MT_ERG6_SMT"/>
    <property type="match status" value="1"/>
</dbReference>
<accession>H2E7T7</accession>
<sequence length="379" mass="41783">MALDLLSSYAPGLVESLLTWKGAAGLAAAVALGYIIISNLPGRQVAKPSLLQVRTGGVAFEKVAEVVADYSDSYGQTEKGELIVKDNNKIVSLANTFYDLITDGYEWGWGSGFHFSHRLPGMSFNASQLLHESRMASFLRLKPGMQVLDVGCGVGNPGRTVAACSGAVVTGITINAYQIKRAELHTKRAGLVGYFKPVQGNFCAMPFQDKSFDAAFAMDSTCHAPKLEDVYSEVFRVLKPGAYFATYEWVSTKNYDSNNPEHVKCMNSIILGNGLPNIRSWKQAEEAGKNVGFNLLTSLDMATNSPIGKPWYSVPERMVNWGLFRFHKACIRTASTLHLLPPESWKFFYILAEMAENLVKGGQWDIFTPMHLLIFQKPE</sequence>